<feature type="chain" id="PRO_0000087946" description="Type II methyltransferase M.BsuBI">
    <location>
        <begin position="1"/>
        <end position="501"/>
    </location>
</feature>
<protein>
    <recommendedName>
        <fullName evidence="2">Type II methyltransferase M.BsuBI</fullName>
        <shortName evidence="2">M.BsuBI</shortName>
        <ecNumber evidence="1">2.1.1.72</ecNumber>
    </recommendedName>
    <alternativeName>
        <fullName>Adenine-specific methyltransferase BsuBI</fullName>
    </alternativeName>
    <alternativeName>
        <fullName>Modification methylase BsuBI</fullName>
    </alternativeName>
    <alternativeName>
        <fullName evidence="2">Type II methyltransferase BsuBI</fullName>
    </alternativeName>
</protein>
<comment type="function">
    <text evidence="1 2">A beta subtype methylase that recognizes the double-stranded sequence 5'-CTGCAG-3', methylates A-5 on both strands, and protects the DNA from cleavage by the BsuBI endonuclease.</text>
</comment>
<comment type="catalytic activity">
    <reaction evidence="1">
        <text>a 2'-deoxyadenosine in DNA + S-adenosyl-L-methionine = an N(6)-methyl-2'-deoxyadenosine in DNA + S-adenosyl-L-homocysteine + H(+)</text>
        <dbReference type="Rhea" id="RHEA:15197"/>
        <dbReference type="Rhea" id="RHEA-COMP:12418"/>
        <dbReference type="Rhea" id="RHEA-COMP:12419"/>
        <dbReference type="ChEBI" id="CHEBI:15378"/>
        <dbReference type="ChEBI" id="CHEBI:57856"/>
        <dbReference type="ChEBI" id="CHEBI:59789"/>
        <dbReference type="ChEBI" id="CHEBI:90615"/>
        <dbReference type="ChEBI" id="CHEBI:90616"/>
        <dbReference type="EC" id="2.1.1.72"/>
    </reaction>
</comment>
<comment type="similarity">
    <text evidence="3">Belongs to the N(4)/N(6)-methyltransferase family.</text>
</comment>
<proteinExistence type="evidence at protein level"/>
<sequence>MTQILETVDKSRLTVNPLLKNKSELGQFFTPSSISIFMACLFSEDKLNNAKVLDAGAGIGSLTSAFLARLISENIGKADLHLLEIDEMLEPYLSETLALFKDYIEINSQIIIDDFIEWAAYSLLDEESLLAKDKQRFTHAILNPPYKKIKSNSKHRKLLRKAGIETVNLYSAFVALTVDLMSDGGEIVFIIPRSFCNGPYFRHFRQHLLNKTSIKHMHLFESRDKAFKDDEVLQENVISKLEKGTVQEDVKISISTDDSFSVIRSYRYPFEKIVQPNDIEKFIHINTTNEETLIEKHPNVCYSLEELNIEVSTGPVVDFRVKENLREMPGEGTVPLFYPNHFVGTSLEYPKMMKKPNAIIRNEKVEKWLYPNGHYVVVKRFSSKEEKRRIVAGVLTPESVNDPVVGFENGLNVLHYNKSGISKEVAYGLYAYLNSTPVDKYFRIFNGHTQVNATDLRTMKFPSRDILISLGKWVIENIENVGQVEIDSKLEELLLNDRGNA</sequence>
<accession>P33563</accession>
<keyword id="KW-0238">DNA-binding</keyword>
<keyword id="KW-0489">Methyltransferase</keyword>
<keyword id="KW-0680">Restriction system</keyword>
<keyword id="KW-0949">S-adenosyl-L-methionine</keyword>
<keyword id="KW-0808">Transferase</keyword>
<gene>
    <name type="primary">hsdBM</name>
    <name type="synonym">hsmB</name>
</gene>
<dbReference type="EC" id="2.1.1.72" evidence="1"/>
<dbReference type="EMBL" id="L01541">
    <property type="protein sequence ID" value="AAA18169.1"/>
    <property type="molecule type" value="Genomic_DNA"/>
</dbReference>
<dbReference type="PIR" id="S35515">
    <property type="entry name" value="S35515"/>
</dbReference>
<dbReference type="REBASE" id="203431">
    <property type="entry name" value="M.Bat1359ORF636P"/>
</dbReference>
<dbReference type="REBASE" id="3336">
    <property type="entry name" value="M.BsuBI"/>
</dbReference>
<dbReference type="PRO" id="PR:P33563"/>
<dbReference type="GO" id="GO:0003677">
    <property type="term" value="F:DNA binding"/>
    <property type="evidence" value="ECO:0007669"/>
    <property type="project" value="UniProtKB-KW"/>
</dbReference>
<dbReference type="GO" id="GO:0009007">
    <property type="term" value="F:site-specific DNA-methyltransferase (adenine-specific) activity"/>
    <property type="evidence" value="ECO:0007669"/>
    <property type="project" value="UniProtKB-EC"/>
</dbReference>
<dbReference type="GO" id="GO:0009307">
    <property type="term" value="P:DNA restriction-modification system"/>
    <property type="evidence" value="ECO:0007669"/>
    <property type="project" value="UniProtKB-KW"/>
</dbReference>
<dbReference type="GO" id="GO:0032259">
    <property type="term" value="P:methylation"/>
    <property type="evidence" value="ECO:0007669"/>
    <property type="project" value="UniProtKB-KW"/>
</dbReference>
<dbReference type="CDD" id="cd02440">
    <property type="entry name" value="AdoMet_MTases"/>
    <property type="match status" value="1"/>
</dbReference>
<dbReference type="Gene3D" id="3.40.50.150">
    <property type="entry name" value="Vaccinia Virus protein VP39"/>
    <property type="match status" value="1"/>
</dbReference>
<dbReference type="InterPro" id="IPR002052">
    <property type="entry name" value="DNA_methylase_N6_adenine_CS"/>
</dbReference>
<dbReference type="InterPro" id="IPR011639">
    <property type="entry name" value="MethylTrfase_TaqI-like_dom"/>
</dbReference>
<dbReference type="InterPro" id="IPR050953">
    <property type="entry name" value="N4_N6_ade-DNA_methylase"/>
</dbReference>
<dbReference type="InterPro" id="IPR029063">
    <property type="entry name" value="SAM-dependent_MTases_sf"/>
</dbReference>
<dbReference type="PANTHER" id="PTHR33841:SF1">
    <property type="entry name" value="DNA METHYLTRANSFERASE A"/>
    <property type="match status" value="1"/>
</dbReference>
<dbReference type="PANTHER" id="PTHR33841">
    <property type="entry name" value="DNA METHYLTRANSFERASE YEEA-RELATED"/>
    <property type="match status" value="1"/>
</dbReference>
<dbReference type="Pfam" id="PF07669">
    <property type="entry name" value="Eco57I"/>
    <property type="match status" value="1"/>
</dbReference>
<dbReference type="PRINTS" id="PR00507">
    <property type="entry name" value="N12N6MTFRASE"/>
</dbReference>
<dbReference type="SUPFAM" id="SSF53335">
    <property type="entry name" value="S-adenosyl-L-methionine-dependent methyltransferases"/>
    <property type="match status" value="1"/>
</dbReference>
<dbReference type="PROSITE" id="PS00092">
    <property type="entry name" value="N6_MTASE"/>
    <property type="match status" value="1"/>
</dbReference>
<name>MTBB_BACIU</name>
<reference key="1">
    <citation type="journal article" date="1992" name="Nucleic Acids Res.">
        <title>BsuBI -- an isospecific restriction and modification system of PstI: characterization of the BsuBI genes and enzymes.</title>
        <authorList>
            <person name="Xu G.-L."/>
            <person name="Kapfer W."/>
            <person name="Walter J."/>
            <person name="Trautner T.A."/>
        </authorList>
    </citation>
    <scope>NUCLEOTIDE SEQUENCE [GENOMIC DNA]</scope>
    <scope>FUNCTION</scope>
    <scope>CATALYTIC ACTIVITY</scope>
    <source>
        <strain>ISB8</strain>
    </source>
</reference>
<reference key="2">
    <citation type="journal article" date="2003" name="Nucleic Acids Res.">
        <title>A nomenclature for restriction enzymes, DNA methyltransferases, homing endonucleases and their genes.</title>
        <authorList>
            <person name="Roberts R.J."/>
            <person name="Belfort M."/>
            <person name="Bestor T."/>
            <person name="Bhagwat A.S."/>
            <person name="Bickle T.A."/>
            <person name="Bitinaite J."/>
            <person name="Blumenthal R.M."/>
            <person name="Degtyarev S.K."/>
            <person name="Dryden D.T."/>
            <person name="Dybvig K."/>
            <person name="Firman K."/>
            <person name="Gromova E.S."/>
            <person name="Gumport R.I."/>
            <person name="Halford S.E."/>
            <person name="Hattman S."/>
            <person name="Heitman J."/>
            <person name="Hornby D.P."/>
            <person name="Janulaitis A."/>
            <person name="Jeltsch A."/>
            <person name="Josephsen J."/>
            <person name="Kiss A."/>
            <person name="Klaenhammer T.R."/>
            <person name="Kobayashi I."/>
            <person name="Kong H."/>
            <person name="Krueger D.H."/>
            <person name="Lacks S."/>
            <person name="Marinus M.G."/>
            <person name="Miyahara M."/>
            <person name="Morgan R.D."/>
            <person name="Murray N.E."/>
            <person name="Nagaraja V."/>
            <person name="Piekarowicz A."/>
            <person name="Pingoud A."/>
            <person name="Raleigh E."/>
            <person name="Rao D.N."/>
            <person name="Reich N."/>
            <person name="Repin V.E."/>
            <person name="Selker E.U."/>
            <person name="Shaw P.C."/>
            <person name="Stein D.C."/>
            <person name="Stoddard B.L."/>
            <person name="Szybalski W."/>
            <person name="Trautner T.A."/>
            <person name="Van Etten J.L."/>
            <person name="Vitor J.M."/>
            <person name="Wilson G.G."/>
            <person name="Xu S.Y."/>
        </authorList>
    </citation>
    <scope>NOMENCLATURE</scope>
    <scope>SUBTYPE</scope>
</reference>
<evidence type="ECO:0000269" key="1">
    <source>
    </source>
</evidence>
<evidence type="ECO:0000303" key="2">
    <source>
    </source>
</evidence>
<evidence type="ECO:0000305" key="3"/>
<organism>
    <name type="scientific">Bacillus subtilis</name>
    <dbReference type="NCBI Taxonomy" id="1423"/>
    <lineage>
        <taxon>Bacteria</taxon>
        <taxon>Bacillati</taxon>
        <taxon>Bacillota</taxon>
        <taxon>Bacilli</taxon>
        <taxon>Bacillales</taxon>
        <taxon>Bacillaceae</taxon>
        <taxon>Bacillus</taxon>
    </lineage>
</organism>